<keyword id="KW-0028">Amino-acid biosynthesis</keyword>
<keyword id="KW-0067">ATP-binding</keyword>
<keyword id="KW-0150">Chloroplast</keyword>
<keyword id="KW-0418">Kinase</keyword>
<keyword id="KW-0547">Nucleotide-binding</keyword>
<keyword id="KW-0611">Plant defense</keyword>
<keyword id="KW-0934">Plastid</keyword>
<keyword id="KW-1185">Reference proteome</keyword>
<keyword id="KW-0791">Threonine biosynthesis</keyword>
<keyword id="KW-0808">Transferase</keyword>
<keyword id="KW-0809">Transit peptide</keyword>
<gene>
    <name type="primary">HSK</name>
    <name type="synonym">DMR1</name>
    <name type="ordered locus">At2g17265</name>
    <name type="ORF">F5J6.24</name>
</gene>
<organism>
    <name type="scientific">Arabidopsis thaliana</name>
    <name type="common">Mouse-ear cress</name>
    <dbReference type="NCBI Taxonomy" id="3702"/>
    <lineage>
        <taxon>Eukaryota</taxon>
        <taxon>Viridiplantae</taxon>
        <taxon>Streptophyta</taxon>
        <taxon>Embryophyta</taxon>
        <taxon>Tracheophyta</taxon>
        <taxon>Spermatophyta</taxon>
        <taxon>Magnoliopsida</taxon>
        <taxon>eudicotyledons</taxon>
        <taxon>Gunneridae</taxon>
        <taxon>Pentapetalae</taxon>
        <taxon>rosids</taxon>
        <taxon>malvids</taxon>
        <taxon>Brassicales</taxon>
        <taxon>Brassicaceae</taxon>
        <taxon>Camelineae</taxon>
        <taxon>Arabidopsis</taxon>
    </lineage>
</organism>
<reference key="1">
    <citation type="journal article" date="1999" name="Arch. Biochem. Biophys.">
        <title>Identification of the gene encoding homoserine kinase from Arabidopsis thaliana and characterization of the recombinant enzyme derived from the gene.</title>
        <authorList>
            <person name="Lee M."/>
            <person name="Leustek T."/>
        </authorList>
    </citation>
    <scope>NUCLEOTIDE SEQUENCE [MRNA]</scope>
    <scope>FUNCTION</scope>
    <scope>BIOPHYSICOCHEMICAL PROPERTIES</scope>
    <source>
        <strain>cv. Columbia</strain>
    </source>
</reference>
<reference key="2">
    <citation type="journal article" date="1999" name="Nature">
        <title>Sequence and analysis of chromosome 2 of the plant Arabidopsis thaliana.</title>
        <authorList>
            <person name="Lin X."/>
            <person name="Kaul S."/>
            <person name="Rounsley S.D."/>
            <person name="Shea T.P."/>
            <person name="Benito M.-I."/>
            <person name="Town C.D."/>
            <person name="Fujii C.Y."/>
            <person name="Mason T.M."/>
            <person name="Bowman C.L."/>
            <person name="Barnstead M.E."/>
            <person name="Feldblyum T.V."/>
            <person name="Buell C.R."/>
            <person name="Ketchum K.A."/>
            <person name="Lee J.J."/>
            <person name="Ronning C.M."/>
            <person name="Koo H.L."/>
            <person name="Moffat K.S."/>
            <person name="Cronin L.A."/>
            <person name="Shen M."/>
            <person name="Pai G."/>
            <person name="Van Aken S."/>
            <person name="Umayam L."/>
            <person name="Tallon L.J."/>
            <person name="Gill J.E."/>
            <person name="Adams M.D."/>
            <person name="Carrera A.J."/>
            <person name="Creasy T.H."/>
            <person name="Goodman H.M."/>
            <person name="Somerville C.R."/>
            <person name="Copenhaver G.P."/>
            <person name="Preuss D."/>
            <person name="Nierman W.C."/>
            <person name="White O."/>
            <person name="Eisen J.A."/>
            <person name="Salzberg S.L."/>
            <person name="Fraser C.M."/>
            <person name="Venter J.C."/>
        </authorList>
    </citation>
    <scope>NUCLEOTIDE SEQUENCE [LARGE SCALE GENOMIC DNA]</scope>
    <source>
        <strain>cv. Columbia</strain>
    </source>
</reference>
<reference key="3">
    <citation type="journal article" date="2017" name="Plant J.">
        <title>Araport11: a complete reannotation of the Arabidopsis thaliana reference genome.</title>
        <authorList>
            <person name="Cheng C.Y."/>
            <person name="Krishnakumar V."/>
            <person name="Chan A.P."/>
            <person name="Thibaud-Nissen F."/>
            <person name="Schobel S."/>
            <person name="Town C.D."/>
        </authorList>
    </citation>
    <scope>GENOME REANNOTATION</scope>
    <source>
        <strain>cv. Columbia</strain>
    </source>
</reference>
<reference key="4">
    <citation type="journal article" date="2002" name="Science">
        <title>Functional annotation of a full-length Arabidopsis cDNA collection.</title>
        <authorList>
            <person name="Seki M."/>
            <person name="Narusaka M."/>
            <person name="Kamiya A."/>
            <person name="Ishida J."/>
            <person name="Satou M."/>
            <person name="Sakurai T."/>
            <person name="Nakajima M."/>
            <person name="Enju A."/>
            <person name="Akiyama K."/>
            <person name="Oono Y."/>
            <person name="Muramatsu M."/>
            <person name="Hayashizaki Y."/>
            <person name="Kawai J."/>
            <person name="Carninci P."/>
            <person name="Itoh M."/>
            <person name="Ishii Y."/>
            <person name="Arakawa T."/>
            <person name="Shibata K."/>
            <person name="Shinagawa A."/>
            <person name="Shinozaki K."/>
        </authorList>
    </citation>
    <scope>NUCLEOTIDE SEQUENCE [LARGE SCALE MRNA]</scope>
    <source>
        <strain>cv. Columbia</strain>
    </source>
</reference>
<reference key="5">
    <citation type="journal article" date="2003" name="Science">
        <title>Empirical analysis of transcriptional activity in the Arabidopsis genome.</title>
        <authorList>
            <person name="Yamada K."/>
            <person name="Lim J."/>
            <person name="Dale J.M."/>
            <person name="Chen H."/>
            <person name="Shinn P."/>
            <person name="Palm C.J."/>
            <person name="Southwick A.M."/>
            <person name="Wu H.C."/>
            <person name="Kim C.J."/>
            <person name="Nguyen M."/>
            <person name="Pham P.K."/>
            <person name="Cheuk R.F."/>
            <person name="Karlin-Newmann G."/>
            <person name="Liu S.X."/>
            <person name="Lam B."/>
            <person name="Sakano H."/>
            <person name="Wu T."/>
            <person name="Yu G."/>
            <person name="Miranda M."/>
            <person name="Quach H.L."/>
            <person name="Tripp M."/>
            <person name="Chang C.H."/>
            <person name="Lee J.M."/>
            <person name="Toriumi M.J."/>
            <person name="Chan M.M."/>
            <person name="Tang C.C."/>
            <person name="Onodera C.S."/>
            <person name="Deng J.M."/>
            <person name="Akiyama K."/>
            <person name="Ansari Y."/>
            <person name="Arakawa T."/>
            <person name="Banh J."/>
            <person name="Banno F."/>
            <person name="Bowser L."/>
            <person name="Brooks S.Y."/>
            <person name="Carninci P."/>
            <person name="Chao Q."/>
            <person name="Choy N."/>
            <person name="Enju A."/>
            <person name="Goldsmith A.D."/>
            <person name="Gurjal M."/>
            <person name="Hansen N.F."/>
            <person name="Hayashizaki Y."/>
            <person name="Johnson-Hopson C."/>
            <person name="Hsuan V.W."/>
            <person name="Iida K."/>
            <person name="Karnes M."/>
            <person name="Khan S."/>
            <person name="Koesema E."/>
            <person name="Ishida J."/>
            <person name="Jiang P.X."/>
            <person name="Jones T."/>
            <person name="Kawai J."/>
            <person name="Kamiya A."/>
            <person name="Meyers C."/>
            <person name="Nakajima M."/>
            <person name="Narusaka M."/>
            <person name="Seki M."/>
            <person name="Sakurai T."/>
            <person name="Satou M."/>
            <person name="Tamse R."/>
            <person name="Vaysberg M."/>
            <person name="Wallender E.K."/>
            <person name="Wong C."/>
            <person name="Yamamura Y."/>
            <person name="Yuan S."/>
            <person name="Shinozaki K."/>
            <person name="Davis R.W."/>
            <person name="Theologis A."/>
            <person name="Ecker J.R."/>
        </authorList>
    </citation>
    <scope>NUCLEOTIDE SEQUENCE [LARGE SCALE MRNA]</scope>
    <source>
        <strain>cv. Columbia</strain>
    </source>
</reference>
<reference key="6">
    <citation type="journal article" date="2005" name="Mol. Plant Microbe Interact.">
        <title>Identification of arabidopsis loci required for susceptibility to the downy mildew pathogen Hyaloperonospora parasitica.</title>
        <authorList>
            <person name="Van Damme M."/>
            <person name="Andel A."/>
            <person name="Huibers R.P."/>
            <person name="Panstruga R."/>
            <person name="Weisbeek P.J."/>
            <person name="Van den Ackerveken G."/>
        </authorList>
    </citation>
    <scope>FUNCTION</scope>
    <scope>DISRUPTION PHENOTYPE</scope>
</reference>
<reference key="7">
    <citation type="journal article" date="2005" name="Plant J.">
        <title>Methionine and threonine synthesis are limited by homoserine availability and not the activity of homoserine kinase in Arabidopsis thaliana.</title>
        <authorList>
            <person name="Lee M."/>
            <person name="Martin M.N."/>
            <person name="Hudson A.O."/>
            <person name="Lee J."/>
            <person name="Muhitch M.J."/>
            <person name="Leustek T."/>
        </authorList>
    </citation>
    <scope>FUNCTION</scope>
    <scope>CATALYTIC ACTIVITY</scope>
    <scope>DISRUPTION PHENOTYPE</scope>
</reference>
<reference key="8">
    <citation type="journal article" date="2009" name="Plant Cell">
        <title>Downy mildew resistance in Arabidopsis by mutation of HOMOSERINE KINASE.</title>
        <authorList>
            <person name="van Damme M."/>
            <person name="Zeilmaker T."/>
            <person name="Elberse J."/>
            <person name="Andel A."/>
            <person name="de Sain-van der Velden M."/>
            <person name="van den Ackerveken G."/>
        </authorList>
    </citation>
    <scope>FUNCTION</scope>
    <scope>DISRUPTION PHENOTYPE</scope>
    <scope>MUTAGENESIS OF GLU-46; GLY-118; GLY-180; GLY-202; MET-241 AND ALA-267</scope>
</reference>
<name>KHSE_ARATH</name>
<protein>
    <recommendedName>
        <fullName evidence="6">Homoserine kinase</fullName>
        <ecNumber evidence="8">2.7.1.39</ecNumber>
    </recommendedName>
    <alternativeName>
        <fullName>Protein DOWNY MILDEW RESISTANT 1</fullName>
    </alternativeName>
</protein>
<comment type="function">
    <text evidence="2 3 4 5 8">Catalyzes the ATP-dependent phosphorylation of L-homoserine to L-homoserine phosphate (PubMed:15703056). Is specific for L-homoserine and cannot use other substrates such D-serine, L-serine, D-threonine and L-threonine, galactose or D-homoserine in vitro. Required for susceptibility to the downy mildew pathogen Hyaloperonospora parasitica.</text>
</comment>
<comment type="catalytic activity">
    <reaction evidence="8">
        <text>L-homoserine + ATP = O-phospho-L-homoserine + ADP + H(+)</text>
        <dbReference type="Rhea" id="RHEA:13985"/>
        <dbReference type="ChEBI" id="CHEBI:15378"/>
        <dbReference type="ChEBI" id="CHEBI:30616"/>
        <dbReference type="ChEBI" id="CHEBI:57476"/>
        <dbReference type="ChEBI" id="CHEBI:57590"/>
        <dbReference type="ChEBI" id="CHEBI:456216"/>
        <dbReference type="EC" id="2.7.1.39"/>
    </reaction>
    <physiologicalReaction direction="left-to-right" evidence="8">
        <dbReference type="Rhea" id="RHEA:13986"/>
    </physiologicalReaction>
</comment>
<comment type="biophysicochemical properties">
    <kinetics>
        <KM evidence="2">0.4 mM for L-homoserine</KM>
        <KM evidence="2">0.32 mM for ATP</KM>
    </kinetics>
</comment>
<comment type="pathway">
    <text>Amino-acid biosynthesis; L-threonine biosynthesis; L-threonine from L-aspartate: step 4/5.</text>
</comment>
<comment type="subcellular location">
    <subcellularLocation>
        <location evidence="7">Plastid</location>
        <location evidence="7">Chloroplast stroma</location>
    </subcellularLocation>
</comment>
<comment type="disruption phenotype">
    <text evidence="3 4 5">No visible phenotype under normal growth conditions, but mutant plant accumulate homoserine and show reduced susceptibility to the downy mildew pathogen Hyaloperonospora parasitica.</text>
</comment>
<comment type="similarity">
    <text evidence="7">Belongs to the GHMP kinase family. Homoserine kinase subfamily.</text>
</comment>
<sequence length="370" mass="38529">MASLCFQSPSKPISYFQPKSNPSPPLFAKVSVFRCRASVQTLVAVEPEPVFVSVKTFAPATVANLGPGFDFLGCAVDGLGDHVTLRVDPSVRAGEVSISEITGTTTKLSTNPLRNCAGIAAIATMKMLGIRSVGLSLDLHKGLPLGSGLGSSAASAAAAAVAVNEIFGRKLGSDQLVLAGLESEAKVSGYHADNIAPAIMGGFVLIRNYEPLDLKPLRFPSDKDLFFVLVSPDFEAPTKKMRAALPTEIPMVHHVWNSSQAAALVAAVLEGDAVMLGKALSSDKIVEPTRAPLIPGMEAVKKAALEAGAFGCTISGAGPTAVAVIDSEEKGQVIGEKMVEAFWKVGHLKSVASVKKLDNVGARLVNSVSR</sequence>
<accession>Q8L7R2</accession>
<accession>Q7FLV1</accession>
<accession>Q9XEE0</accession>
<evidence type="ECO:0000255" key="1"/>
<evidence type="ECO:0000269" key="2">
    <source>
    </source>
</evidence>
<evidence type="ECO:0000269" key="3">
    <source>
    </source>
</evidence>
<evidence type="ECO:0000269" key="4">
    <source>
    </source>
</evidence>
<evidence type="ECO:0000269" key="5">
    <source>
    </source>
</evidence>
<evidence type="ECO:0000303" key="6">
    <source>
    </source>
</evidence>
<evidence type="ECO:0000305" key="7"/>
<evidence type="ECO:0000305" key="8">
    <source>
    </source>
</evidence>
<proteinExistence type="evidence at protein level"/>
<dbReference type="EC" id="2.7.1.39" evidence="8"/>
<dbReference type="EMBL" id="AF082525">
    <property type="protein sequence ID" value="AAD33097.1"/>
    <property type="molecule type" value="mRNA"/>
</dbReference>
<dbReference type="EMBL" id="CP002685">
    <property type="protein sequence ID" value="AEC06605.1"/>
    <property type="molecule type" value="Genomic_DNA"/>
</dbReference>
<dbReference type="EMBL" id="AK117871">
    <property type="protein sequence ID" value="BAC42512.2"/>
    <property type="molecule type" value="mRNA"/>
</dbReference>
<dbReference type="EMBL" id="AY128313">
    <property type="protein sequence ID" value="AAM91516.1"/>
    <property type="molecule type" value="mRNA"/>
</dbReference>
<dbReference type="EMBL" id="BT001174">
    <property type="protein sequence ID" value="AAN65061.1"/>
    <property type="molecule type" value="mRNA"/>
</dbReference>
<dbReference type="RefSeq" id="NP_179318.1">
    <property type="nucleotide sequence ID" value="NM_127281.2"/>
</dbReference>
<dbReference type="SMR" id="Q8L7R2"/>
<dbReference type="FunCoup" id="Q8L7R2">
    <property type="interactions" value="1154"/>
</dbReference>
<dbReference type="STRING" id="3702.Q8L7R2"/>
<dbReference type="GlyGen" id="Q8L7R2">
    <property type="glycosylation" value="1 site"/>
</dbReference>
<dbReference type="iPTMnet" id="Q8L7R2"/>
<dbReference type="PaxDb" id="3702-AT2G17265.1"/>
<dbReference type="ProMEX" id="Q8L7R2"/>
<dbReference type="ProteomicsDB" id="250688"/>
<dbReference type="EnsemblPlants" id="AT2G17265.1">
    <property type="protein sequence ID" value="AT2G17265.1"/>
    <property type="gene ID" value="AT2G17265"/>
</dbReference>
<dbReference type="GeneID" id="816232"/>
<dbReference type="Gramene" id="AT2G17265.1">
    <property type="protein sequence ID" value="AT2G17265.1"/>
    <property type="gene ID" value="AT2G17265"/>
</dbReference>
<dbReference type="KEGG" id="ath:AT2G17265"/>
<dbReference type="Araport" id="AT2G17265"/>
<dbReference type="TAIR" id="AT2G17265">
    <property type="gene designation" value="HSK"/>
</dbReference>
<dbReference type="eggNOG" id="KOG1537">
    <property type="taxonomic scope" value="Eukaryota"/>
</dbReference>
<dbReference type="HOGENOM" id="CLU_041243_1_0_1"/>
<dbReference type="InParanoid" id="Q8L7R2"/>
<dbReference type="OMA" id="CANRIPH"/>
<dbReference type="PhylomeDB" id="Q8L7R2"/>
<dbReference type="BioCyc" id="MetaCyc:MONOMER-1961"/>
<dbReference type="BRENDA" id="2.7.1.39">
    <property type="organism ID" value="399"/>
</dbReference>
<dbReference type="SABIO-RK" id="Q8L7R2"/>
<dbReference type="UniPathway" id="UPA00050">
    <property type="reaction ID" value="UER00064"/>
</dbReference>
<dbReference type="PRO" id="PR:Q8L7R2"/>
<dbReference type="Proteomes" id="UP000006548">
    <property type="component" value="Chromosome 2"/>
</dbReference>
<dbReference type="ExpressionAtlas" id="Q8L7R2">
    <property type="expression patterns" value="baseline and differential"/>
</dbReference>
<dbReference type="GO" id="GO:0009507">
    <property type="term" value="C:chloroplast"/>
    <property type="evidence" value="ECO:0007005"/>
    <property type="project" value="TAIR"/>
</dbReference>
<dbReference type="GO" id="GO:0009570">
    <property type="term" value="C:chloroplast stroma"/>
    <property type="evidence" value="ECO:0000314"/>
    <property type="project" value="TAIR"/>
</dbReference>
<dbReference type="GO" id="GO:0005524">
    <property type="term" value="F:ATP binding"/>
    <property type="evidence" value="ECO:0007669"/>
    <property type="project" value="UniProtKB-KW"/>
</dbReference>
<dbReference type="GO" id="GO:0004413">
    <property type="term" value="F:homoserine kinase activity"/>
    <property type="evidence" value="ECO:0000314"/>
    <property type="project" value="TAIR"/>
</dbReference>
<dbReference type="GO" id="GO:0006952">
    <property type="term" value="P:defense response"/>
    <property type="evidence" value="ECO:0007669"/>
    <property type="project" value="UniProtKB-KW"/>
</dbReference>
<dbReference type="GO" id="GO:0009086">
    <property type="term" value="P:methionine biosynthetic process"/>
    <property type="evidence" value="ECO:0000304"/>
    <property type="project" value="TAIR"/>
</dbReference>
<dbReference type="GO" id="GO:0048573">
    <property type="term" value="P:photoperiodism, flowering"/>
    <property type="evidence" value="ECO:0000315"/>
    <property type="project" value="TAIR"/>
</dbReference>
<dbReference type="GO" id="GO:0009617">
    <property type="term" value="P:response to bacterium"/>
    <property type="evidence" value="ECO:0000316"/>
    <property type="project" value="TAIR"/>
</dbReference>
<dbReference type="GO" id="GO:0009620">
    <property type="term" value="P:response to fungus"/>
    <property type="evidence" value="ECO:0000316"/>
    <property type="project" value="TAIR"/>
</dbReference>
<dbReference type="GO" id="GO:0009088">
    <property type="term" value="P:threonine biosynthetic process"/>
    <property type="evidence" value="ECO:0000304"/>
    <property type="project" value="TAIR"/>
</dbReference>
<dbReference type="FunFam" id="3.30.230.10:FF:000096">
    <property type="entry name" value="Homoserine kinase"/>
    <property type="match status" value="1"/>
</dbReference>
<dbReference type="FunFam" id="3.30.70.890:FF:000019">
    <property type="entry name" value="Homoserine kinase"/>
    <property type="match status" value="1"/>
</dbReference>
<dbReference type="Gene3D" id="3.30.230.10">
    <property type="match status" value="1"/>
</dbReference>
<dbReference type="Gene3D" id="3.30.70.890">
    <property type="entry name" value="GHMP kinase, C-terminal domain"/>
    <property type="match status" value="1"/>
</dbReference>
<dbReference type="HAMAP" id="MF_00384">
    <property type="entry name" value="Homoser_kinase"/>
    <property type="match status" value="1"/>
</dbReference>
<dbReference type="InterPro" id="IPR013750">
    <property type="entry name" value="GHMP_kinase_C_dom"/>
</dbReference>
<dbReference type="InterPro" id="IPR036554">
    <property type="entry name" value="GHMP_kinase_C_sf"/>
</dbReference>
<dbReference type="InterPro" id="IPR006204">
    <property type="entry name" value="GHMP_kinase_N_dom"/>
</dbReference>
<dbReference type="InterPro" id="IPR006203">
    <property type="entry name" value="GHMP_knse_ATP-bd_CS"/>
</dbReference>
<dbReference type="InterPro" id="IPR000870">
    <property type="entry name" value="Homoserine_kinase"/>
</dbReference>
<dbReference type="InterPro" id="IPR020568">
    <property type="entry name" value="Ribosomal_Su5_D2-typ_SF"/>
</dbReference>
<dbReference type="InterPro" id="IPR014721">
    <property type="entry name" value="Ribsml_uS5_D2-typ_fold_subgr"/>
</dbReference>
<dbReference type="NCBIfam" id="NF002288">
    <property type="entry name" value="PRK01212.1-4"/>
    <property type="match status" value="1"/>
</dbReference>
<dbReference type="NCBIfam" id="TIGR00191">
    <property type="entry name" value="thrB"/>
    <property type="match status" value="1"/>
</dbReference>
<dbReference type="PANTHER" id="PTHR20861:SF1">
    <property type="entry name" value="HOMOSERINE KINASE"/>
    <property type="match status" value="1"/>
</dbReference>
<dbReference type="PANTHER" id="PTHR20861">
    <property type="entry name" value="HOMOSERINE/4-DIPHOSPHOCYTIDYL-2-C-METHYL-D-ERYTHRITOL KINASE"/>
    <property type="match status" value="1"/>
</dbReference>
<dbReference type="Pfam" id="PF08544">
    <property type="entry name" value="GHMP_kinases_C"/>
    <property type="match status" value="1"/>
</dbReference>
<dbReference type="Pfam" id="PF00288">
    <property type="entry name" value="GHMP_kinases_N"/>
    <property type="match status" value="1"/>
</dbReference>
<dbReference type="PIRSF" id="PIRSF000676">
    <property type="entry name" value="Homoser_kin"/>
    <property type="match status" value="1"/>
</dbReference>
<dbReference type="PRINTS" id="PR00958">
    <property type="entry name" value="HOMSERKINASE"/>
</dbReference>
<dbReference type="SUPFAM" id="SSF55060">
    <property type="entry name" value="GHMP Kinase, C-terminal domain"/>
    <property type="match status" value="1"/>
</dbReference>
<dbReference type="SUPFAM" id="SSF54211">
    <property type="entry name" value="Ribosomal protein S5 domain 2-like"/>
    <property type="match status" value="1"/>
</dbReference>
<dbReference type="PROSITE" id="PS00627">
    <property type="entry name" value="GHMP_KINASES_ATP"/>
    <property type="match status" value="1"/>
</dbReference>
<feature type="transit peptide" description="Chloroplast" evidence="1">
    <location>
        <begin position="1"/>
        <end position="34"/>
    </location>
</feature>
<feature type="chain" id="PRO_0000428662" description="Homoserine kinase">
    <location>
        <begin position="35"/>
        <end position="370"/>
    </location>
</feature>
<feature type="binding site" evidence="1">
    <location>
        <begin position="143"/>
        <end position="154"/>
    </location>
    <ligand>
        <name>ATP</name>
        <dbReference type="ChEBI" id="CHEBI:30616"/>
    </ligand>
</feature>
<feature type="mutagenesis site" description="In dmr1-2; loss of function." evidence="5">
    <original>E</original>
    <variation>K</variation>
    <location>
        <position position="46"/>
    </location>
</feature>
<feature type="mutagenesis site" description="In dmr1-6; loss of function." evidence="5">
    <original>G</original>
    <variation>R</variation>
    <location>
        <position position="118"/>
    </location>
</feature>
<feature type="mutagenesis site" description="In dmr1-5; loss of function." evidence="5">
    <original>G</original>
    <variation>D</variation>
    <location>
        <position position="180"/>
    </location>
</feature>
<feature type="mutagenesis site" description="In dmr1-4; loss of function." evidence="5">
    <original>G</original>
    <variation>R</variation>
    <location>
        <position position="202"/>
    </location>
</feature>
<feature type="mutagenesis site" description="In dmr1-3; loss of function." evidence="5">
    <original>M</original>
    <variation>K</variation>
    <location>
        <position position="241"/>
    </location>
</feature>
<feature type="mutagenesis site" description="In dmr1-1; loss of function." evidence="5">
    <original>A</original>
    <variation>V</variation>
    <location>
        <position position="267"/>
    </location>
</feature>
<feature type="sequence conflict" description="In Ref. 4; BAC42512." evidence="7" ref="4">
    <original>V</original>
    <variation>F</variation>
    <location>
        <position position="32"/>
    </location>
</feature>
<feature type="sequence conflict" description="In Ref. 1; AAD33097." evidence="7" ref="1">
    <original>R</original>
    <variation>K</variation>
    <location>
        <position position="218"/>
    </location>
</feature>
<feature type="sequence conflict" description="In Ref. 1; AAD33097." evidence="7" ref="1">
    <original>D</original>
    <variation>E</variation>
    <location>
        <position position="233"/>
    </location>
</feature>
<feature type="sequence conflict" description="In Ref. 1; AAD33097." evidence="7" ref="1">
    <original>N</original>
    <variation>K</variation>
    <location>
        <position position="359"/>
    </location>
</feature>